<protein>
    <recommendedName>
        <fullName evidence="1">Formate-dependent phosphoribosylglycinamide formyltransferase</fullName>
        <ecNumber evidence="1">6.3.1.21</ecNumber>
    </recommendedName>
    <alternativeName>
        <fullName evidence="1">5'-phosphoribosylglycinamide transformylase 2</fullName>
    </alternativeName>
    <alternativeName>
        <fullName evidence="1">Formate-dependent GAR transformylase</fullName>
    </alternativeName>
    <alternativeName>
        <fullName evidence="1">GAR transformylase 2</fullName>
        <shortName evidence="1">GART 2</shortName>
    </alternativeName>
    <alternativeName>
        <fullName evidence="1">Non-folate glycinamide ribonucleotide transformylase</fullName>
    </alternativeName>
    <alternativeName>
        <fullName evidence="1">Phosphoribosylglycinamide formyltransferase 2</fullName>
    </alternativeName>
</protein>
<comment type="function">
    <text evidence="1">Involved in the de novo purine biosynthesis. Catalyzes the transfer of formate to 5-phospho-ribosyl-glycinamide (GAR), producing 5-phospho-ribosyl-N-formylglycinamide (FGAR). Formate is provided by PurU via hydrolysis of 10-formyl-tetrahydrofolate.</text>
</comment>
<comment type="catalytic activity">
    <reaction evidence="1">
        <text>N(1)-(5-phospho-beta-D-ribosyl)glycinamide + formate + ATP = N(2)-formyl-N(1)-(5-phospho-beta-D-ribosyl)glycinamide + ADP + phosphate + H(+)</text>
        <dbReference type="Rhea" id="RHEA:24829"/>
        <dbReference type="ChEBI" id="CHEBI:15378"/>
        <dbReference type="ChEBI" id="CHEBI:15740"/>
        <dbReference type="ChEBI" id="CHEBI:30616"/>
        <dbReference type="ChEBI" id="CHEBI:43474"/>
        <dbReference type="ChEBI" id="CHEBI:143788"/>
        <dbReference type="ChEBI" id="CHEBI:147286"/>
        <dbReference type="ChEBI" id="CHEBI:456216"/>
        <dbReference type="EC" id="6.3.1.21"/>
    </reaction>
    <physiologicalReaction direction="left-to-right" evidence="1">
        <dbReference type="Rhea" id="RHEA:24830"/>
    </physiologicalReaction>
</comment>
<comment type="pathway">
    <text evidence="1">Purine metabolism; IMP biosynthesis via de novo pathway; N(2)-formyl-N(1)-(5-phospho-D-ribosyl)glycinamide from N(1)-(5-phospho-D-ribosyl)glycinamide (formate route): step 1/1.</text>
</comment>
<comment type="subunit">
    <text evidence="1">Homodimer.</text>
</comment>
<comment type="similarity">
    <text evidence="1">Belongs to the PurK/PurT family.</text>
</comment>
<reference key="1">
    <citation type="journal article" date="2003" name="Nature">
        <title>The genome of a motile marine Synechococcus.</title>
        <authorList>
            <person name="Palenik B."/>
            <person name="Brahamsha B."/>
            <person name="Larimer F.W."/>
            <person name="Land M.L."/>
            <person name="Hauser L."/>
            <person name="Chain P."/>
            <person name="Lamerdin J.E."/>
            <person name="Regala W."/>
            <person name="Allen E.E."/>
            <person name="McCarren J."/>
            <person name="Paulsen I.T."/>
            <person name="Dufresne A."/>
            <person name="Partensky F."/>
            <person name="Webb E.A."/>
            <person name="Waterbury J."/>
        </authorList>
    </citation>
    <scope>NUCLEOTIDE SEQUENCE [LARGE SCALE GENOMIC DNA]</scope>
    <source>
        <strain>WH8102</strain>
    </source>
</reference>
<proteinExistence type="inferred from homology"/>
<sequence>MTQFPKTVMLLGSGELGKEVAISAQRIGCHVIACDRYADAPAMQVADQAEVLAMTDTDALLATVRRHRPDVVIPEIEALAVSALAELEQDGITVIPTARATAVTMNRDRIRDLAAGELALRSARFAYAASAEELRAEAPALGWPVVVKPVMSSSGKGQSVVDGPDGLDQAWDAAMAGARGTSPRVIVEEFLRFDLEITLLTIRQHNGETLFCAPIGHEQEHGDYQCSWQPAELSSEQLHQAQAMARTVTQNLGGVGLFGVEFFLCGDEVIFSELSPRPHDTGLVTLISQNLSEFELHLRAVLGLPIPSITTADAAASRVILAQNQMDAVSYTGVDTALQEPDTQLLLFGKPTARPGRRMGVALARGEHLAEARAKADRAAACVRVLQR</sequence>
<dbReference type="EC" id="6.3.1.21" evidence="1"/>
<dbReference type="EMBL" id="BX569695">
    <property type="protein sequence ID" value="CAE09034.1"/>
    <property type="molecule type" value="Genomic_DNA"/>
</dbReference>
<dbReference type="RefSeq" id="WP_011129372.1">
    <property type="nucleotide sequence ID" value="NC_005070.1"/>
</dbReference>
<dbReference type="SMR" id="Q7U3B3"/>
<dbReference type="STRING" id="84588.SYNW2519"/>
<dbReference type="KEGG" id="syw:SYNW2519"/>
<dbReference type="eggNOG" id="COG0027">
    <property type="taxonomic scope" value="Bacteria"/>
</dbReference>
<dbReference type="HOGENOM" id="CLU_011534_1_3_3"/>
<dbReference type="UniPathway" id="UPA00074">
    <property type="reaction ID" value="UER00127"/>
</dbReference>
<dbReference type="Proteomes" id="UP000001422">
    <property type="component" value="Chromosome"/>
</dbReference>
<dbReference type="GO" id="GO:0005829">
    <property type="term" value="C:cytosol"/>
    <property type="evidence" value="ECO:0007669"/>
    <property type="project" value="TreeGrafter"/>
</dbReference>
<dbReference type="GO" id="GO:0005524">
    <property type="term" value="F:ATP binding"/>
    <property type="evidence" value="ECO:0007669"/>
    <property type="project" value="UniProtKB-UniRule"/>
</dbReference>
<dbReference type="GO" id="GO:0000287">
    <property type="term" value="F:magnesium ion binding"/>
    <property type="evidence" value="ECO:0007669"/>
    <property type="project" value="InterPro"/>
</dbReference>
<dbReference type="GO" id="GO:0043815">
    <property type="term" value="F:phosphoribosylglycinamide formyltransferase 2 activity"/>
    <property type="evidence" value="ECO:0007669"/>
    <property type="project" value="UniProtKB-UniRule"/>
</dbReference>
<dbReference type="GO" id="GO:0004644">
    <property type="term" value="F:phosphoribosylglycinamide formyltransferase activity"/>
    <property type="evidence" value="ECO:0007669"/>
    <property type="project" value="InterPro"/>
</dbReference>
<dbReference type="GO" id="GO:0006189">
    <property type="term" value="P:'de novo' IMP biosynthetic process"/>
    <property type="evidence" value="ECO:0007669"/>
    <property type="project" value="UniProtKB-UniRule"/>
</dbReference>
<dbReference type="Gene3D" id="3.40.50.20">
    <property type="match status" value="1"/>
</dbReference>
<dbReference type="Gene3D" id="3.30.1490.20">
    <property type="entry name" value="ATP-grasp fold, A domain"/>
    <property type="match status" value="1"/>
</dbReference>
<dbReference type="Gene3D" id="3.30.470.20">
    <property type="entry name" value="ATP-grasp fold, B domain"/>
    <property type="match status" value="1"/>
</dbReference>
<dbReference type="HAMAP" id="MF_01643">
    <property type="entry name" value="PurT"/>
    <property type="match status" value="1"/>
</dbReference>
<dbReference type="InterPro" id="IPR011761">
    <property type="entry name" value="ATP-grasp"/>
</dbReference>
<dbReference type="InterPro" id="IPR003135">
    <property type="entry name" value="ATP-grasp_carboxylate-amine"/>
</dbReference>
<dbReference type="InterPro" id="IPR013815">
    <property type="entry name" value="ATP_grasp_subdomain_1"/>
</dbReference>
<dbReference type="InterPro" id="IPR016185">
    <property type="entry name" value="PreATP-grasp_dom_sf"/>
</dbReference>
<dbReference type="InterPro" id="IPR005862">
    <property type="entry name" value="PurT"/>
</dbReference>
<dbReference type="InterPro" id="IPR054350">
    <property type="entry name" value="PurT/PurK_preATP-grasp"/>
</dbReference>
<dbReference type="InterPro" id="IPR048740">
    <property type="entry name" value="PurT_C"/>
</dbReference>
<dbReference type="InterPro" id="IPR011054">
    <property type="entry name" value="Rudment_hybrid_motif"/>
</dbReference>
<dbReference type="NCBIfam" id="NF006766">
    <property type="entry name" value="PRK09288.1"/>
    <property type="match status" value="1"/>
</dbReference>
<dbReference type="NCBIfam" id="TIGR01142">
    <property type="entry name" value="purT"/>
    <property type="match status" value="1"/>
</dbReference>
<dbReference type="PANTHER" id="PTHR43055">
    <property type="entry name" value="FORMATE-DEPENDENT PHOSPHORIBOSYLGLYCINAMIDE FORMYLTRANSFERASE"/>
    <property type="match status" value="1"/>
</dbReference>
<dbReference type="PANTHER" id="PTHR43055:SF1">
    <property type="entry name" value="FORMATE-DEPENDENT PHOSPHORIBOSYLGLYCINAMIDE FORMYLTRANSFERASE"/>
    <property type="match status" value="1"/>
</dbReference>
<dbReference type="Pfam" id="PF02222">
    <property type="entry name" value="ATP-grasp"/>
    <property type="match status" value="1"/>
</dbReference>
<dbReference type="Pfam" id="PF21244">
    <property type="entry name" value="PurT_C"/>
    <property type="match status" value="1"/>
</dbReference>
<dbReference type="Pfam" id="PF22660">
    <property type="entry name" value="RS_preATP-grasp-like"/>
    <property type="match status" value="1"/>
</dbReference>
<dbReference type="SUPFAM" id="SSF56059">
    <property type="entry name" value="Glutathione synthetase ATP-binding domain-like"/>
    <property type="match status" value="1"/>
</dbReference>
<dbReference type="SUPFAM" id="SSF52440">
    <property type="entry name" value="PreATP-grasp domain"/>
    <property type="match status" value="1"/>
</dbReference>
<dbReference type="SUPFAM" id="SSF51246">
    <property type="entry name" value="Rudiment single hybrid motif"/>
    <property type="match status" value="1"/>
</dbReference>
<dbReference type="PROSITE" id="PS50975">
    <property type="entry name" value="ATP_GRASP"/>
    <property type="match status" value="1"/>
</dbReference>
<name>PURT_PARMW</name>
<feature type="chain" id="PRO_0000319252" description="Formate-dependent phosphoribosylglycinamide formyltransferase">
    <location>
        <begin position="1"/>
        <end position="388"/>
    </location>
</feature>
<feature type="domain" description="ATP-grasp" evidence="1">
    <location>
        <begin position="112"/>
        <end position="302"/>
    </location>
</feature>
<feature type="binding site" evidence="1">
    <location>
        <begin position="15"/>
        <end position="16"/>
    </location>
    <ligand>
        <name>N(1)-(5-phospho-beta-D-ribosyl)glycinamide</name>
        <dbReference type="ChEBI" id="CHEBI:143788"/>
    </ligand>
</feature>
<feature type="binding site" evidence="1">
    <location>
        <position position="75"/>
    </location>
    <ligand>
        <name>N(1)-(5-phospho-beta-D-ribosyl)glycinamide</name>
        <dbReference type="ChEBI" id="CHEBI:143788"/>
    </ligand>
</feature>
<feature type="binding site" evidence="1">
    <location>
        <position position="107"/>
    </location>
    <ligand>
        <name>ATP</name>
        <dbReference type="ChEBI" id="CHEBI:30616"/>
    </ligand>
</feature>
<feature type="binding site" evidence="1">
    <location>
        <position position="148"/>
    </location>
    <ligand>
        <name>ATP</name>
        <dbReference type="ChEBI" id="CHEBI:30616"/>
    </ligand>
</feature>
<feature type="binding site" evidence="1">
    <location>
        <begin position="153"/>
        <end position="158"/>
    </location>
    <ligand>
        <name>ATP</name>
        <dbReference type="ChEBI" id="CHEBI:30616"/>
    </ligand>
</feature>
<feature type="binding site" evidence="1">
    <location>
        <begin position="188"/>
        <end position="191"/>
    </location>
    <ligand>
        <name>ATP</name>
        <dbReference type="ChEBI" id="CHEBI:30616"/>
    </ligand>
</feature>
<feature type="binding site" evidence="1">
    <location>
        <position position="196"/>
    </location>
    <ligand>
        <name>ATP</name>
        <dbReference type="ChEBI" id="CHEBI:30616"/>
    </ligand>
</feature>
<feature type="binding site" evidence="1">
    <location>
        <position position="261"/>
    </location>
    <ligand>
        <name>Mg(2+)</name>
        <dbReference type="ChEBI" id="CHEBI:18420"/>
    </ligand>
</feature>
<feature type="binding site" evidence="1">
    <location>
        <position position="273"/>
    </location>
    <ligand>
        <name>Mg(2+)</name>
        <dbReference type="ChEBI" id="CHEBI:18420"/>
    </ligand>
</feature>
<feature type="binding site" evidence="1">
    <location>
        <position position="280"/>
    </location>
    <ligand>
        <name>N(1)-(5-phospho-beta-D-ribosyl)glycinamide</name>
        <dbReference type="ChEBI" id="CHEBI:143788"/>
    </ligand>
</feature>
<feature type="binding site" evidence="1">
    <location>
        <position position="350"/>
    </location>
    <ligand>
        <name>N(1)-(5-phospho-beta-D-ribosyl)glycinamide</name>
        <dbReference type="ChEBI" id="CHEBI:143788"/>
    </ligand>
</feature>
<feature type="binding site" evidence="1">
    <location>
        <begin position="357"/>
        <end position="358"/>
    </location>
    <ligand>
        <name>N(1)-(5-phospho-beta-D-ribosyl)glycinamide</name>
        <dbReference type="ChEBI" id="CHEBI:143788"/>
    </ligand>
</feature>
<accession>Q7U3B3</accession>
<evidence type="ECO:0000255" key="1">
    <source>
        <dbReference type="HAMAP-Rule" id="MF_01643"/>
    </source>
</evidence>
<organism>
    <name type="scientific">Parasynechococcus marenigrum (strain WH8102)</name>
    <dbReference type="NCBI Taxonomy" id="84588"/>
    <lineage>
        <taxon>Bacteria</taxon>
        <taxon>Bacillati</taxon>
        <taxon>Cyanobacteriota</taxon>
        <taxon>Cyanophyceae</taxon>
        <taxon>Synechococcales</taxon>
        <taxon>Prochlorococcaceae</taxon>
        <taxon>Parasynechococcus</taxon>
        <taxon>Parasynechococcus marenigrum</taxon>
    </lineage>
</organism>
<gene>
    <name evidence="1" type="primary">purT</name>
    <name type="ordered locus">SYNW2519</name>
</gene>
<keyword id="KW-0067">ATP-binding</keyword>
<keyword id="KW-0436">Ligase</keyword>
<keyword id="KW-0460">Magnesium</keyword>
<keyword id="KW-0479">Metal-binding</keyword>
<keyword id="KW-0547">Nucleotide-binding</keyword>
<keyword id="KW-0658">Purine biosynthesis</keyword>